<comment type="function">
    <text evidence="1">Inhibits all the catalytic activities of DNA gyrase by preventing its interaction with DNA. Acts by binding directly to the C-terminal domain of GyrB, which probably disrupts DNA binding by the gyrase.</text>
</comment>
<comment type="cofactor">
    <cofactor evidence="1">
        <name>Zn(2+)</name>
        <dbReference type="ChEBI" id="CHEBI:29105"/>
    </cofactor>
    <text evidence="1">Binds 1 zinc ion.</text>
</comment>
<comment type="subunit">
    <text evidence="1">Interacts with GyrB.</text>
</comment>
<comment type="similarity">
    <text evidence="1">Belongs to the DNA gyrase inhibitor YacG family.</text>
</comment>
<protein>
    <recommendedName>
        <fullName evidence="1">DNA gyrase inhibitor YacG</fullName>
    </recommendedName>
</protein>
<keyword id="KW-0479">Metal-binding</keyword>
<keyword id="KW-1185">Reference proteome</keyword>
<keyword id="KW-0862">Zinc</keyword>
<feature type="chain" id="PRO_0000211704" description="DNA gyrase inhibitor YacG">
    <location>
        <begin position="1"/>
        <end position="70"/>
    </location>
</feature>
<feature type="region of interest" description="Disordered" evidence="2">
    <location>
        <begin position="44"/>
        <end position="70"/>
    </location>
</feature>
<feature type="binding site" evidence="1">
    <location>
        <position position="9"/>
    </location>
    <ligand>
        <name>Zn(2+)</name>
        <dbReference type="ChEBI" id="CHEBI:29105"/>
    </ligand>
</feature>
<feature type="binding site" evidence="1">
    <location>
        <position position="12"/>
    </location>
    <ligand>
        <name>Zn(2+)</name>
        <dbReference type="ChEBI" id="CHEBI:29105"/>
    </ligand>
</feature>
<feature type="binding site" evidence="1">
    <location>
        <position position="28"/>
    </location>
    <ligand>
        <name>Zn(2+)</name>
        <dbReference type="ChEBI" id="CHEBI:29105"/>
    </ligand>
</feature>
<feature type="binding site" evidence="1">
    <location>
        <position position="32"/>
    </location>
    <ligand>
        <name>Zn(2+)</name>
        <dbReference type="ChEBI" id="CHEBI:29105"/>
    </ligand>
</feature>
<evidence type="ECO:0000255" key="1">
    <source>
        <dbReference type="HAMAP-Rule" id="MF_00649"/>
    </source>
</evidence>
<evidence type="ECO:0000256" key="2">
    <source>
        <dbReference type="SAM" id="MobiDB-lite"/>
    </source>
</evidence>
<name>YACG_LEGPH</name>
<gene>
    <name evidence="1" type="primary">yacG</name>
    <name type="ordered locus">lpg0216</name>
</gene>
<reference key="1">
    <citation type="journal article" date="2004" name="Science">
        <title>The genomic sequence of the accidental pathogen Legionella pneumophila.</title>
        <authorList>
            <person name="Chien M."/>
            <person name="Morozova I."/>
            <person name="Shi S."/>
            <person name="Sheng H."/>
            <person name="Chen J."/>
            <person name="Gomez S.M."/>
            <person name="Asamani G."/>
            <person name="Hill K."/>
            <person name="Nuara J."/>
            <person name="Feder M."/>
            <person name="Rineer J."/>
            <person name="Greenberg J.J."/>
            <person name="Steshenko V."/>
            <person name="Park S.H."/>
            <person name="Zhao B."/>
            <person name="Teplitskaya E."/>
            <person name="Edwards J.R."/>
            <person name="Pampou S."/>
            <person name="Georghiou A."/>
            <person name="Chou I.-C."/>
            <person name="Iannuccilli W."/>
            <person name="Ulz M.E."/>
            <person name="Kim D.H."/>
            <person name="Geringer-Sameth A."/>
            <person name="Goldsberry C."/>
            <person name="Morozov P."/>
            <person name="Fischer S.G."/>
            <person name="Segal G."/>
            <person name="Qu X."/>
            <person name="Rzhetsky A."/>
            <person name="Zhang P."/>
            <person name="Cayanis E."/>
            <person name="De Jong P.J."/>
            <person name="Ju J."/>
            <person name="Kalachikov S."/>
            <person name="Shuman H.A."/>
            <person name="Russo J.J."/>
        </authorList>
    </citation>
    <scope>NUCLEOTIDE SEQUENCE [LARGE SCALE GENOMIC DNA]</scope>
    <source>
        <strain>Philadelphia 1 / ATCC 33152 / DSM 7513</strain>
    </source>
</reference>
<accession>Q5ZYZ5</accession>
<sequence>MNNQQKIKCPICDKQNTWRPDNLFRPFCSERCKLIDLGEWASESRKIPGSSIDPESIVTTNNKQDNVDEQ</sequence>
<organism>
    <name type="scientific">Legionella pneumophila subsp. pneumophila (strain Philadelphia 1 / ATCC 33152 / DSM 7513)</name>
    <dbReference type="NCBI Taxonomy" id="272624"/>
    <lineage>
        <taxon>Bacteria</taxon>
        <taxon>Pseudomonadati</taxon>
        <taxon>Pseudomonadota</taxon>
        <taxon>Gammaproteobacteria</taxon>
        <taxon>Legionellales</taxon>
        <taxon>Legionellaceae</taxon>
        <taxon>Legionella</taxon>
    </lineage>
</organism>
<dbReference type="EMBL" id="AE017354">
    <property type="protein sequence ID" value="AAU26323.1"/>
    <property type="molecule type" value="Genomic_DNA"/>
</dbReference>
<dbReference type="RefSeq" id="WP_010945977.1">
    <property type="nucleotide sequence ID" value="NC_002942.5"/>
</dbReference>
<dbReference type="RefSeq" id="YP_094270.1">
    <property type="nucleotide sequence ID" value="NC_002942.5"/>
</dbReference>
<dbReference type="SMR" id="Q5ZYZ5"/>
<dbReference type="STRING" id="272624.lpg0216"/>
<dbReference type="PaxDb" id="272624-lpg0216"/>
<dbReference type="KEGG" id="lpn:lpg0216"/>
<dbReference type="PATRIC" id="fig|272624.6.peg.229"/>
<dbReference type="eggNOG" id="COG3024">
    <property type="taxonomic scope" value="Bacteria"/>
</dbReference>
<dbReference type="HOGENOM" id="CLU_178280_1_0_6"/>
<dbReference type="OrthoDB" id="9809663at2"/>
<dbReference type="Proteomes" id="UP000000609">
    <property type="component" value="Chromosome"/>
</dbReference>
<dbReference type="GO" id="GO:0008657">
    <property type="term" value="F:DNA topoisomerase type II (double strand cut, ATP-hydrolyzing) inhibitor activity"/>
    <property type="evidence" value="ECO:0007669"/>
    <property type="project" value="UniProtKB-UniRule"/>
</dbReference>
<dbReference type="GO" id="GO:0008270">
    <property type="term" value="F:zinc ion binding"/>
    <property type="evidence" value="ECO:0007669"/>
    <property type="project" value="UniProtKB-UniRule"/>
</dbReference>
<dbReference type="GO" id="GO:0006355">
    <property type="term" value="P:regulation of DNA-templated transcription"/>
    <property type="evidence" value="ECO:0007669"/>
    <property type="project" value="InterPro"/>
</dbReference>
<dbReference type="Gene3D" id="3.30.50.10">
    <property type="entry name" value="Erythroid Transcription Factor GATA-1, subunit A"/>
    <property type="match status" value="1"/>
</dbReference>
<dbReference type="HAMAP" id="MF_00649">
    <property type="entry name" value="DNA_gyrase_inhibitor_YacG"/>
    <property type="match status" value="1"/>
</dbReference>
<dbReference type="InterPro" id="IPR005584">
    <property type="entry name" value="DNA_gyrase_inhibitor_YacG"/>
</dbReference>
<dbReference type="InterPro" id="IPR013088">
    <property type="entry name" value="Znf_NHR/GATA"/>
</dbReference>
<dbReference type="PANTHER" id="PTHR36150">
    <property type="entry name" value="DNA GYRASE INHIBITOR YACG"/>
    <property type="match status" value="1"/>
</dbReference>
<dbReference type="PANTHER" id="PTHR36150:SF1">
    <property type="entry name" value="DNA GYRASE INHIBITOR YACG"/>
    <property type="match status" value="1"/>
</dbReference>
<dbReference type="Pfam" id="PF03884">
    <property type="entry name" value="YacG"/>
    <property type="match status" value="1"/>
</dbReference>
<dbReference type="SUPFAM" id="SSF57716">
    <property type="entry name" value="Glucocorticoid receptor-like (DNA-binding domain)"/>
    <property type="match status" value="1"/>
</dbReference>
<proteinExistence type="inferred from homology"/>